<accession>A9VPT9</accession>
<proteinExistence type="inferred from homology"/>
<evidence type="ECO:0000255" key="1">
    <source>
        <dbReference type="HAMAP-Rule" id="MF_00779"/>
    </source>
</evidence>
<reference key="1">
    <citation type="journal article" date="2008" name="Chem. Biol. Interact.">
        <title>Extending the Bacillus cereus group genomics to putative food-borne pathogens of different toxicity.</title>
        <authorList>
            <person name="Lapidus A."/>
            <person name="Goltsman E."/>
            <person name="Auger S."/>
            <person name="Galleron N."/>
            <person name="Segurens B."/>
            <person name="Dossat C."/>
            <person name="Land M.L."/>
            <person name="Broussolle V."/>
            <person name="Brillard J."/>
            <person name="Guinebretiere M.-H."/>
            <person name="Sanchis V."/>
            <person name="Nguen-the C."/>
            <person name="Lereclus D."/>
            <person name="Richardson P."/>
            <person name="Wincker P."/>
            <person name="Weissenbach J."/>
            <person name="Ehrlich S.D."/>
            <person name="Sorokin A."/>
        </authorList>
    </citation>
    <scope>NUCLEOTIDE SEQUENCE [LARGE SCALE GENOMIC DNA]</scope>
    <source>
        <strain>KBAB4</strain>
    </source>
</reference>
<organism>
    <name type="scientific">Bacillus mycoides (strain KBAB4)</name>
    <name type="common">Bacillus weihenstephanensis</name>
    <dbReference type="NCBI Taxonomy" id="315730"/>
    <lineage>
        <taxon>Bacteria</taxon>
        <taxon>Bacillati</taxon>
        <taxon>Bacillota</taxon>
        <taxon>Bacilli</taxon>
        <taxon>Bacillales</taxon>
        <taxon>Bacillaceae</taxon>
        <taxon>Bacillus</taxon>
        <taxon>Bacillus cereus group</taxon>
    </lineage>
</organism>
<feature type="chain" id="PRO_1000148465" description="Hut operon positive regulatory protein">
    <location>
        <begin position="1"/>
        <end position="146"/>
    </location>
</feature>
<sequence>MLLQGTHRIGRMAMLLALADENESPVLSIPKGWKYCTGKVGSMNSQKVVAAMETAAKSNRVIETDVYRETHALYHAIMEALYGVTRGQIQLADVLRTVGLRFAIVRGTPYDGKKEGEWVAVALYGTIGAPVKGSEHEAIGLGINHI</sequence>
<dbReference type="EMBL" id="CP000903">
    <property type="protein sequence ID" value="ABY44515.1"/>
    <property type="molecule type" value="Genomic_DNA"/>
</dbReference>
<dbReference type="RefSeq" id="WP_000926519.1">
    <property type="nucleotide sequence ID" value="NZ_CAKMRX030000188.1"/>
</dbReference>
<dbReference type="SMR" id="A9VPT9"/>
<dbReference type="GeneID" id="92883969"/>
<dbReference type="KEGG" id="bwe:BcerKBAB4_3340"/>
<dbReference type="eggNOG" id="ENOG502ZFIH">
    <property type="taxonomic scope" value="Bacteria"/>
</dbReference>
<dbReference type="HOGENOM" id="CLU_148478_0_0_9"/>
<dbReference type="Proteomes" id="UP000002154">
    <property type="component" value="Chromosome"/>
</dbReference>
<dbReference type="GO" id="GO:0003729">
    <property type="term" value="F:mRNA binding"/>
    <property type="evidence" value="ECO:0007669"/>
    <property type="project" value="UniProtKB-UniRule"/>
</dbReference>
<dbReference type="GO" id="GO:0006547">
    <property type="term" value="P:L-histidine metabolic process"/>
    <property type="evidence" value="ECO:0007669"/>
    <property type="project" value="UniProtKB-UniRule"/>
</dbReference>
<dbReference type="GO" id="GO:0010628">
    <property type="term" value="P:positive regulation of gene expression"/>
    <property type="evidence" value="ECO:0007669"/>
    <property type="project" value="UniProtKB-UniRule"/>
</dbReference>
<dbReference type="FunFam" id="3.40.1510.10:FF:000001">
    <property type="entry name" value="Hut operon positive regulatory protein"/>
    <property type="match status" value="1"/>
</dbReference>
<dbReference type="Gene3D" id="3.40.1510.10">
    <property type="entry name" value="Hut operon regulatory protein HutP"/>
    <property type="match status" value="1"/>
</dbReference>
<dbReference type="HAMAP" id="MF_00779">
    <property type="entry name" value="HutP"/>
    <property type="match status" value="1"/>
</dbReference>
<dbReference type="InterPro" id="IPR015111">
    <property type="entry name" value="Regulatory_HutP"/>
</dbReference>
<dbReference type="InterPro" id="IPR023552">
    <property type="entry name" value="Regulatory_HutP_bacillales"/>
</dbReference>
<dbReference type="InterPro" id="IPR036482">
    <property type="entry name" value="Regulatory_HutP_sf"/>
</dbReference>
<dbReference type="NCBIfam" id="NF002838">
    <property type="entry name" value="PRK03065.1"/>
    <property type="match status" value="1"/>
</dbReference>
<dbReference type="Pfam" id="PF09021">
    <property type="entry name" value="HutP"/>
    <property type="match status" value="1"/>
</dbReference>
<dbReference type="SUPFAM" id="SSF111064">
    <property type="entry name" value="Hut operon positive regulatory protein HutP"/>
    <property type="match status" value="1"/>
</dbReference>
<gene>
    <name evidence="1" type="primary">hutP</name>
    <name type="ordered locus">BcerKBAB4_3340</name>
</gene>
<comment type="function">
    <text evidence="1">Antiterminator that binds to cis-acting regulatory sequences on the mRNA in the presence of histidine, thereby suppressing transcription termination and activating the hut operon for histidine utilization.</text>
</comment>
<comment type="subunit">
    <text evidence="1">Homohexamer.</text>
</comment>
<comment type="similarity">
    <text evidence="1">Belongs to the HutP family.</text>
</comment>
<name>HUTP_BACMK</name>
<protein>
    <recommendedName>
        <fullName evidence="1">Hut operon positive regulatory protein</fullName>
    </recommendedName>
</protein>
<keyword id="KW-0010">Activator</keyword>
<keyword id="KW-0369">Histidine metabolism</keyword>
<keyword id="KW-0694">RNA-binding</keyword>
<keyword id="KW-0804">Transcription</keyword>
<keyword id="KW-0805">Transcription regulation</keyword>